<comment type="similarity">
    <text evidence="2">Belongs to the IGBP1/TAP42 family.</text>
</comment>
<organism>
    <name type="scientific">Homo sapiens</name>
    <name type="common">Human</name>
    <dbReference type="NCBI Taxonomy" id="9606"/>
    <lineage>
        <taxon>Eukaryota</taxon>
        <taxon>Metazoa</taxon>
        <taxon>Chordata</taxon>
        <taxon>Craniata</taxon>
        <taxon>Vertebrata</taxon>
        <taxon>Euteleostomi</taxon>
        <taxon>Mammalia</taxon>
        <taxon>Eutheria</taxon>
        <taxon>Euarchontoglires</taxon>
        <taxon>Primates</taxon>
        <taxon>Haplorrhini</taxon>
        <taxon>Catarrhini</taxon>
        <taxon>Hominidae</taxon>
        <taxon>Homo</taxon>
    </lineage>
</organism>
<sequence>MAAAEDEFLPPPRLPELFDSSKQLLDEVEGATEPTGSRIVQEKVFKGLDLLDKVAKMLSQLDLFSRNEDLEEITSTDLKYLMVPAFQGALTMKQVNPRKRLDHLQQAREHFIKYLTQCHYYRVAEFELPQTKTNSAENHGAITSTAYPSLVAMASQRQAKIERYKQKKVLEHKLSTMKSAVESGQADNERVREYYLLHLQRWIDISLEEIESIDQEIKILGEKDSSREASTSNSCHQKRPPMKPFILTRNMAQAKVFGAGYPSLASMTVSDWYDQHQKHGVLPDQGIAKATPEEFRKATQQQEDQEKEEEDDEQTLQRAREWDDWKDTHPRGYGNRQNMG</sequence>
<protein>
    <recommendedName>
        <fullName evidence="2">Immunoglobulin-binding protein 1 family member C</fullName>
    </recommendedName>
</protein>
<feature type="chain" id="PRO_0000457381" description="Immunoglobulin-binding protein 1 family member C">
    <location>
        <begin position="1"/>
        <end position="340"/>
    </location>
</feature>
<feature type="region of interest" description="Disordered" evidence="1">
    <location>
        <begin position="223"/>
        <end position="243"/>
    </location>
</feature>
<feature type="region of interest" description="Disordered" evidence="1">
    <location>
        <begin position="292"/>
        <end position="340"/>
    </location>
</feature>
<feature type="compositionally biased region" description="Acidic residues" evidence="1">
    <location>
        <begin position="303"/>
        <end position="314"/>
    </location>
</feature>
<feature type="compositionally biased region" description="Basic and acidic residues" evidence="1">
    <location>
        <begin position="318"/>
        <end position="330"/>
    </location>
</feature>
<accession>A0A1W2PR95</accession>
<name>IGB1C_HUMAN</name>
<reference key="1">
    <citation type="journal article" date="2006" name="Nature">
        <title>DNA sequence of human chromosome 17 and analysis of rearrangement in the human lineage.</title>
        <authorList>
            <person name="Zody M.C."/>
            <person name="Garber M."/>
            <person name="Adams D.J."/>
            <person name="Sharpe T."/>
            <person name="Harrow J."/>
            <person name="Lupski J.R."/>
            <person name="Nicholson C."/>
            <person name="Searle S.M."/>
            <person name="Wilming L."/>
            <person name="Young S.K."/>
            <person name="Abouelleil A."/>
            <person name="Allen N.R."/>
            <person name="Bi W."/>
            <person name="Bloom T."/>
            <person name="Borowsky M.L."/>
            <person name="Bugalter B.E."/>
            <person name="Butler J."/>
            <person name="Chang J.L."/>
            <person name="Chen C.-K."/>
            <person name="Cook A."/>
            <person name="Corum B."/>
            <person name="Cuomo C.A."/>
            <person name="de Jong P.J."/>
            <person name="DeCaprio D."/>
            <person name="Dewar K."/>
            <person name="FitzGerald M."/>
            <person name="Gilbert J."/>
            <person name="Gibson R."/>
            <person name="Gnerre S."/>
            <person name="Goldstein S."/>
            <person name="Grafham D.V."/>
            <person name="Grocock R."/>
            <person name="Hafez N."/>
            <person name="Hagopian D.S."/>
            <person name="Hart E."/>
            <person name="Norman C.H."/>
            <person name="Humphray S."/>
            <person name="Jaffe D.B."/>
            <person name="Jones M."/>
            <person name="Kamal M."/>
            <person name="Khodiyar V.K."/>
            <person name="LaButti K."/>
            <person name="Laird G."/>
            <person name="Lehoczky J."/>
            <person name="Liu X."/>
            <person name="Lokyitsang T."/>
            <person name="Loveland J."/>
            <person name="Lui A."/>
            <person name="Macdonald P."/>
            <person name="Major J.E."/>
            <person name="Matthews L."/>
            <person name="Mauceli E."/>
            <person name="McCarroll S.A."/>
            <person name="Mihalev A.H."/>
            <person name="Mudge J."/>
            <person name="Nguyen C."/>
            <person name="Nicol R."/>
            <person name="O'Leary S.B."/>
            <person name="Osoegawa K."/>
            <person name="Schwartz D.C."/>
            <person name="Shaw-Smith C."/>
            <person name="Stankiewicz P."/>
            <person name="Steward C."/>
            <person name="Swarbreck D."/>
            <person name="Venkataraman V."/>
            <person name="Whittaker C.A."/>
            <person name="Yang X."/>
            <person name="Zimmer A.R."/>
            <person name="Bradley A."/>
            <person name="Hubbard T."/>
            <person name="Birren B.W."/>
            <person name="Rogers J."/>
            <person name="Lander E.S."/>
            <person name="Nusbaum C."/>
        </authorList>
    </citation>
    <scope>NUCLEOTIDE SEQUENCE [LARGE SCALE GENOMIC DNA]</scope>
</reference>
<reference key="2">
    <citation type="submission" date="2005-09" db="EMBL/GenBank/DDBJ databases">
        <authorList>
            <person name="Mural R.J."/>
            <person name="Istrail S."/>
            <person name="Sutton G.G."/>
            <person name="Florea L."/>
            <person name="Halpern A.L."/>
            <person name="Mobarry C.M."/>
            <person name="Lippert R."/>
            <person name="Walenz B."/>
            <person name="Shatkay H."/>
            <person name="Dew I."/>
            <person name="Miller J.R."/>
            <person name="Flanigan M.J."/>
            <person name="Edwards N.J."/>
            <person name="Bolanos R."/>
            <person name="Fasulo D."/>
            <person name="Halldorsson B.V."/>
            <person name="Hannenhalli S."/>
            <person name="Turner R."/>
            <person name="Yooseph S."/>
            <person name="Lu F."/>
            <person name="Nusskern D.R."/>
            <person name="Shue B.C."/>
            <person name="Zheng X.H."/>
            <person name="Zhong F."/>
            <person name="Delcher A.L."/>
            <person name="Huson D.H."/>
            <person name="Kravitz S.A."/>
            <person name="Mouchard L."/>
            <person name="Reinert K."/>
            <person name="Remington K.A."/>
            <person name="Clark A.G."/>
            <person name="Waterman M.S."/>
            <person name="Eichler E.E."/>
            <person name="Adams M.D."/>
            <person name="Hunkapiller M.W."/>
            <person name="Myers E.W."/>
            <person name="Venter J.C."/>
        </authorList>
    </citation>
    <scope>NUCLEOTIDE SEQUENCE [LARGE SCALE GENOMIC DNA]</scope>
</reference>
<evidence type="ECO:0000256" key="1">
    <source>
        <dbReference type="SAM" id="MobiDB-lite"/>
    </source>
</evidence>
<evidence type="ECO:0000305" key="2"/>
<evidence type="ECO:0000312" key="3">
    <source>
        <dbReference type="HGNC" id="HGNC:43611"/>
    </source>
</evidence>
<keyword id="KW-1267">Proteomics identification</keyword>
<keyword id="KW-1185">Reference proteome</keyword>
<gene>
    <name evidence="3" type="primary">IGBP1C</name>
    <name evidence="3" type="synonym">IGBP1P2</name>
</gene>
<dbReference type="EMBL" id="AC011195">
    <property type="status" value="NOT_ANNOTATED_CDS"/>
    <property type="molecule type" value="Genomic_DNA"/>
</dbReference>
<dbReference type="EMBL" id="CH471109">
    <property type="protein sequence ID" value="EAW94435.1"/>
    <property type="molecule type" value="Genomic_DNA"/>
</dbReference>
<dbReference type="CCDS" id="CCDS92369.1"/>
<dbReference type="RefSeq" id="NP_001382895.1">
    <property type="nucleotide sequence ID" value="NM_001395966.1"/>
</dbReference>
<dbReference type="SMR" id="A0A1W2PR95"/>
<dbReference type="FunCoup" id="A0A1W2PR95">
    <property type="interactions" value="775"/>
</dbReference>
<dbReference type="STRING" id="9606.ENSP00000492384"/>
<dbReference type="BioMuta" id="ENSG00000266826"/>
<dbReference type="MassIVE" id="A0A1W2PR95"/>
<dbReference type="PeptideAtlas" id="A0A1W2PR95"/>
<dbReference type="Ensembl" id="ENST00000583666.3">
    <property type="protein sequence ID" value="ENSP00000492384.1"/>
    <property type="gene ID" value="ENSG00000266826.3"/>
</dbReference>
<dbReference type="GeneID" id="645545"/>
<dbReference type="MANE-Select" id="ENST00000583666.3">
    <property type="protein sequence ID" value="ENSP00000492384.1"/>
    <property type="RefSeq nucleotide sequence ID" value="NM_001395966.1"/>
    <property type="RefSeq protein sequence ID" value="NP_001382895.1"/>
</dbReference>
<dbReference type="AGR" id="HGNC:43611"/>
<dbReference type="GeneCards" id="IGBP1C"/>
<dbReference type="HGNC" id="HGNC:43611">
    <property type="gene designation" value="IGBP1C"/>
</dbReference>
<dbReference type="VEuPathDB" id="HostDB:ENSG00000266826"/>
<dbReference type="GeneTree" id="ENSGT00390000002414"/>
<dbReference type="InParanoid" id="A0A1W2PR95"/>
<dbReference type="OMA" id="YDQHQKH"/>
<dbReference type="OrthoDB" id="10261753at2759"/>
<dbReference type="PAN-GO" id="A0A1W2PR95">
    <property type="GO annotations" value="3 GO annotations based on evolutionary models"/>
</dbReference>
<dbReference type="PRO" id="PR:A0A1W2PR95"/>
<dbReference type="Proteomes" id="UP000005640">
    <property type="component" value="Chromosome 17"/>
</dbReference>
<dbReference type="RNAct" id="A0A1W2PR95">
    <property type="molecule type" value="protein"/>
</dbReference>
<dbReference type="Bgee" id="ENSG00000266826">
    <property type="expression patterns" value="Expressed in primordial germ cell in gonad and 12 other cell types or tissues"/>
</dbReference>
<dbReference type="GO" id="GO:0005829">
    <property type="term" value="C:cytosol"/>
    <property type="evidence" value="ECO:0000318"/>
    <property type="project" value="GO_Central"/>
</dbReference>
<dbReference type="GO" id="GO:0051721">
    <property type="term" value="F:protein phosphatase 2A binding"/>
    <property type="evidence" value="ECO:0000318"/>
    <property type="project" value="GO_Central"/>
</dbReference>
<dbReference type="GO" id="GO:0035303">
    <property type="term" value="P:regulation of dephosphorylation"/>
    <property type="evidence" value="ECO:0000318"/>
    <property type="project" value="GO_Central"/>
</dbReference>
<dbReference type="GO" id="GO:0009966">
    <property type="term" value="P:regulation of signal transduction"/>
    <property type="evidence" value="ECO:0007669"/>
    <property type="project" value="InterPro"/>
</dbReference>
<dbReference type="FunFam" id="1.25.40.540:FF:000003">
    <property type="entry name" value="Immunoglobulin (CD79A)-binding protein 1"/>
    <property type="match status" value="1"/>
</dbReference>
<dbReference type="Gene3D" id="6.10.250.1140">
    <property type="match status" value="1"/>
</dbReference>
<dbReference type="Gene3D" id="1.25.40.540">
    <property type="entry name" value="TAP42-like family"/>
    <property type="match status" value="1"/>
</dbReference>
<dbReference type="InterPro" id="IPR038511">
    <property type="entry name" value="TAP42/TAP46-like_sf"/>
</dbReference>
<dbReference type="InterPro" id="IPR007304">
    <property type="entry name" value="TAP46-like"/>
</dbReference>
<dbReference type="PANTHER" id="PTHR10933">
    <property type="entry name" value="IMMUNOGLOBULIN-BINDING PROTEIN 1"/>
    <property type="match status" value="1"/>
</dbReference>
<dbReference type="PANTHER" id="PTHR10933:SF15">
    <property type="entry name" value="IMMUNOGLOBULIN-BINDING PROTEIN 1 FAMILY MEMBER C"/>
    <property type="match status" value="1"/>
</dbReference>
<dbReference type="Pfam" id="PF04177">
    <property type="entry name" value="TAP42"/>
    <property type="match status" value="1"/>
</dbReference>
<proteinExistence type="evidence at protein level"/>